<accession>Q0HG57</accession>
<dbReference type="EMBL" id="CP000446">
    <property type="protein sequence ID" value="ABI39960.1"/>
    <property type="molecule type" value="Genomic_DNA"/>
</dbReference>
<dbReference type="RefSeq" id="WP_011623639.1">
    <property type="nucleotide sequence ID" value="NC_008321.1"/>
</dbReference>
<dbReference type="SMR" id="Q0HG57"/>
<dbReference type="GeneID" id="94728988"/>
<dbReference type="KEGG" id="she:Shewmr4_2889"/>
<dbReference type="HOGENOM" id="CLU_069054_5_3_6"/>
<dbReference type="GO" id="GO:0005829">
    <property type="term" value="C:cytosol"/>
    <property type="evidence" value="ECO:0007669"/>
    <property type="project" value="TreeGrafter"/>
</dbReference>
<dbReference type="GO" id="GO:0051537">
    <property type="term" value="F:2 iron, 2 sulfur cluster binding"/>
    <property type="evidence" value="ECO:0007669"/>
    <property type="project" value="UniProtKB-ARBA"/>
</dbReference>
<dbReference type="GO" id="GO:0051539">
    <property type="term" value="F:4 iron, 4 sulfur cluster binding"/>
    <property type="evidence" value="ECO:0007669"/>
    <property type="project" value="TreeGrafter"/>
</dbReference>
<dbReference type="GO" id="GO:0005506">
    <property type="term" value="F:iron ion binding"/>
    <property type="evidence" value="ECO:0007669"/>
    <property type="project" value="UniProtKB-UniRule"/>
</dbReference>
<dbReference type="GO" id="GO:0016226">
    <property type="term" value="P:iron-sulfur cluster assembly"/>
    <property type="evidence" value="ECO:0007669"/>
    <property type="project" value="UniProtKB-UniRule"/>
</dbReference>
<dbReference type="FunFam" id="2.60.300.12:FF:000002">
    <property type="entry name" value="Iron-sulfur cluster insertion protein ErpA"/>
    <property type="match status" value="1"/>
</dbReference>
<dbReference type="Gene3D" id="2.60.300.12">
    <property type="entry name" value="HesB-like domain"/>
    <property type="match status" value="1"/>
</dbReference>
<dbReference type="HAMAP" id="MF_01380">
    <property type="entry name" value="Fe_S_insert_ErpA"/>
    <property type="match status" value="1"/>
</dbReference>
<dbReference type="InterPro" id="IPR000361">
    <property type="entry name" value="FeS_biogenesis"/>
</dbReference>
<dbReference type="InterPro" id="IPR016092">
    <property type="entry name" value="FeS_cluster_insertion"/>
</dbReference>
<dbReference type="InterPro" id="IPR017870">
    <property type="entry name" value="FeS_cluster_insertion_CS"/>
</dbReference>
<dbReference type="InterPro" id="IPR023063">
    <property type="entry name" value="FeS_cluster_insertion_RrpA"/>
</dbReference>
<dbReference type="InterPro" id="IPR035903">
    <property type="entry name" value="HesB-like_dom_sf"/>
</dbReference>
<dbReference type="NCBIfam" id="TIGR00049">
    <property type="entry name" value="iron-sulfur cluster assembly accessory protein"/>
    <property type="match status" value="1"/>
</dbReference>
<dbReference type="NCBIfam" id="NF010147">
    <property type="entry name" value="PRK13623.1"/>
    <property type="match status" value="1"/>
</dbReference>
<dbReference type="PANTHER" id="PTHR43011">
    <property type="entry name" value="IRON-SULFUR CLUSTER ASSEMBLY 2 HOMOLOG, MITOCHONDRIAL"/>
    <property type="match status" value="1"/>
</dbReference>
<dbReference type="PANTHER" id="PTHR43011:SF1">
    <property type="entry name" value="IRON-SULFUR CLUSTER ASSEMBLY 2 HOMOLOG, MITOCHONDRIAL"/>
    <property type="match status" value="1"/>
</dbReference>
<dbReference type="Pfam" id="PF01521">
    <property type="entry name" value="Fe-S_biosyn"/>
    <property type="match status" value="1"/>
</dbReference>
<dbReference type="SUPFAM" id="SSF89360">
    <property type="entry name" value="HesB-like domain"/>
    <property type="match status" value="1"/>
</dbReference>
<dbReference type="PROSITE" id="PS01152">
    <property type="entry name" value="HESB"/>
    <property type="match status" value="1"/>
</dbReference>
<evidence type="ECO:0000255" key="1">
    <source>
        <dbReference type="HAMAP-Rule" id="MF_01380"/>
    </source>
</evidence>
<feature type="chain" id="PRO_0000311556" description="Iron-sulfur cluster insertion protein ErpA">
    <location>
        <begin position="1"/>
        <end position="116"/>
    </location>
</feature>
<feature type="binding site" evidence="1">
    <location>
        <position position="44"/>
    </location>
    <ligand>
        <name>iron-sulfur cluster</name>
        <dbReference type="ChEBI" id="CHEBI:30408"/>
    </ligand>
</feature>
<feature type="binding site" evidence="1">
    <location>
        <position position="108"/>
    </location>
    <ligand>
        <name>iron-sulfur cluster</name>
        <dbReference type="ChEBI" id="CHEBI:30408"/>
    </ligand>
</feature>
<feature type="binding site" evidence="1">
    <location>
        <position position="110"/>
    </location>
    <ligand>
        <name>iron-sulfur cluster</name>
        <dbReference type="ChEBI" id="CHEBI:30408"/>
    </ligand>
</feature>
<name>ERPA_SHESM</name>
<organism>
    <name type="scientific">Shewanella sp. (strain MR-4)</name>
    <dbReference type="NCBI Taxonomy" id="60480"/>
    <lineage>
        <taxon>Bacteria</taxon>
        <taxon>Pseudomonadati</taxon>
        <taxon>Pseudomonadota</taxon>
        <taxon>Gammaproteobacteria</taxon>
        <taxon>Alteromonadales</taxon>
        <taxon>Shewanellaceae</taxon>
        <taxon>Shewanella</taxon>
    </lineage>
</organism>
<comment type="function">
    <text evidence="1">Required for insertion of 4Fe-4S clusters for at least IspG.</text>
</comment>
<comment type="cofactor">
    <cofactor evidence="1">
        <name>iron-sulfur cluster</name>
        <dbReference type="ChEBI" id="CHEBI:30408"/>
    </cofactor>
    <text evidence="1">Binds 1 iron-sulfur cluster per subunit.</text>
</comment>
<comment type="subunit">
    <text evidence="1">Homodimer.</text>
</comment>
<comment type="similarity">
    <text evidence="1">Belongs to the HesB/IscA family.</text>
</comment>
<sequence>MTDQADAAMPIKFTDAAAAKVKGLLEEEQNPALKLRVYVTGGGCSGFQYGFTFDEKVNEGDFTVEKQGVQLVVDPMSLQYLVGGEVDYTSGLEGSRFFVKNPNATTTCGCGASFSV</sequence>
<protein>
    <recommendedName>
        <fullName evidence="1">Iron-sulfur cluster insertion protein ErpA</fullName>
    </recommendedName>
</protein>
<reference key="1">
    <citation type="submission" date="2006-08" db="EMBL/GenBank/DDBJ databases">
        <title>Complete sequence of Shewanella sp. MR-4.</title>
        <authorList>
            <consortium name="US DOE Joint Genome Institute"/>
            <person name="Copeland A."/>
            <person name="Lucas S."/>
            <person name="Lapidus A."/>
            <person name="Barry K."/>
            <person name="Detter J.C."/>
            <person name="Glavina del Rio T."/>
            <person name="Hammon N."/>
            <person name="Israni S."/>
            <person name="Dalin E."/>
            <person name="Tice H."/>
            <person name="Pitluck S."/>
            <person name="Kiss H."/>
            <person name="Brettin T."/>
            <person name="Bruce D."/>
            <person name="Han C."/>
            <person name="Tapia R."/>
            <person name="Gilna P."/>
            <person name="Schmutz J."/>
            <person name="Larimer F."/>
            <person name="Land M."/>
            <person name="Hauser L."/>
            <person name="Kyrpides N."/>
            <person name="Mikhailova N."/>
            <person name="Nealson K."/>
            <person name="Konstantinidis K."/>
            <person name="Klappenbach J."/>
            <person name="Tiedje J."/>
            <person name="Richardson P."/>
        </authorList>
    </citation>
    <scope>NUCLEOTIDE SEQUENCE [LARGE SCALE GENOMIC DNA]</scope>
    <source>
        <strain>MR-4</strain>
    </source>
</reference>
<gene>
    <name evidence="1" type="primary">erpA</name>
    <name type="ordered locus">Shewmr4_2889</name>
</gene>
<keyword id="KW-0408">Iron</keyword>
<keyword id="KW-0411">Iron-sulfur</keyword>
<keyword id="KW-0479">Metal-binding</keyword>
<proteinExistence type="inferred from homology"/>